<sequence>MVYTPSKGPRTLYDKVFDAHVVHQDENGSFLLYIDRHLVHEVTSPQAFEGLENAGRKVRRVDCTLATVDHNIPTESRKNFKSLDTFIKQTDSRLQVKTLENNVKQFGVPYFGMSDARQGIVHTIGPEEGFTLPGTTVVCGDSHTSTHGAFGSLAFGIGTSEVEHVLATQTIIQAKSKNMRITVNGKLSPGITSKDLILYIIGLIGTAGGTGCVIEFAGEAIEALSMEARMSMCNMAIEAGARAGMIKPDETTFQYTKGRPLAPKGAEWEKAVAYWKTLKTDEGAKFDHEINIEAVDVIPTITWGTSPQDALPITGSVPDPKNVTDPIKKSGMERALAYMGLEPNTPLKSIKVDKVFIGSCTNGRIEDLRSAAAVVRGQKLASNIKLAMVVPGSGLVKKQAEAEGLDKIFQEAGFEWREAGCSICLGMNPDILDAYERCASTSNRNFEGRQGALSRTHLMSPAMAAAAGIAGHFVDIREFEYKDQDQSSPKVEVTSEDEKELESAAYDHAEPVQPEDAPQDIANDELKDIPVKSDDTPAKPSSSGMKPFLTLEGISAPLDKANVDTDAIIPKQFLKTIKRTGLKKGLFYEWRFRKDDQGKDQETDFVLNVEPWREAEILVVTGDNFGCGSSREHAPWALKDFGIKSIIAPSYGDIFYNNSFKNGLLPIRLDQQIIIDKLIPIANKGGKLCVDLPNQKILDSDGNVLVDHFEIEPFRKHCLVNGLDDIGITLQKEEYISRYEALRREKYSFLEGGSKLLKFDNVPKRKAVTTTFDKVHQDW</sequence>
<reference key="1">
    <citation type="journal article" date="1991" name="Yeast">
        <title>Complete sequence of the Saccharomyces cerevisiae LEU1 gene encoding isopropylmalate isomerase.</title>
        <authorList>
            <person name="Skala J."/>
            <person name="Capieaux E."/>
            <person name="Balzi E."/>
            <person name="Chen W."/>
            <person name="Goffeau A."/>
        </authorList>
    </citation>
    <scope>NUCLEOTIDE SEQUENCE [GENOMIC DNA]</scope>
    <source>
        <strain>ATCC 46191 / IL125-2B</strain>
    </source>
</reference>
<reference key="2">
    <citation type="journal article" date="1997" name="Nature">
        <title>The nucleotide sequence of Saccharomyces cerevisiae chromosome VII.</title>
        <authorList>
            <person name="Tettelin H."/>
            <person name="Agostoni-Carbone M.L."/>
            <person name="Albermann K."/>
            <person name="Albers M."/>
            <person name="Arroyo J."/>
            <person name="Backes U."/>
            <person name="Barreiros T."/>
            <person name="Bertani I."/>
            <person name="Bjourson A.J."/>
            <person name="Brueckner M."/>
            <person name="Bruschi C.V."/>
            <person name="Carignani G."/>
            <person name="Castagnoli L."/>
            <person name="Cerdan E."/>
            <person name="Clemente M.L."/>
            <person name="Coblenz A."/>
            <person name="Coglievina M."/>
            <person name="Coissac E."/>
            <person name="Defoor E."/>
            <person name="Del Bino S."/>
            <person name="Delius H."/>
            <person name="Delneri D."/>
            <person name="de Wergifosse P."/>
            <person name="Dujon B."/>
            <person name="Durand P."/>
            <person name="Entian K.-D."/>
            <person name="Eraso P."/>
            <person name="Escribano V."/>
            <person name="Fabiani L."/>
            <person name="Fartmann B."/>
            <person name="Feroli F."/>
            <person name="Feuermann M."/>
            <person name="Frontali L."/>
            <person name="Garcia-Gonzalez M."/>
            <person name="Garcia-Saez M.I."/>
            <person name="Goffeau A."/>
            <person name="Guerreiro P."/>
            <person name="Hani J."/>
            <person name="Hansen M."/>
            <person name="Hebling U."/>
            <person name="Hernandez K."/>
            <person name="Heumann K."/>
            <person name="Hilger F."/>
            <person name="Hofmann B."/>
            <person name="Indge K.J."/>
            <person name="James C.M."/>
            <person name="Klima R."/>
            <person name="Koetter P."/>
            <person name="Kramer B."/>
            <person name="Kramer W."/>
            <person name="Lauquin G."/>
            <person name="Leuther H."/>
            <person name="Louis E.J."/>
            <person name="Maillier E."/>
            <person name="Marconi A."/>
            <person name="Martegani E."/>
            <person name="Mazon M.J."/>
            <person name="Mazzoni C."/>
            <person name="McReynolds A.D.K."/>
            <person name="Melchioretto P."/>
            <person name="Mewes H.-W."/>
            <person name="Minenkova O."/>
            <person name="Mueller-Auer S."/>
            <person name="Nawrocki A."/>
            <person name="Netter P."/>
            <person name="Neu R."/>
            <person name="Nombela C."/>
            <person name="Oliver S.G."/>
            <person name="Panzeri L."/>
            <person name="Paoluzi S."/>
            <person name="Plevani P."/>
            <person name="Portetelle D."/>
            <person name="Portillo F."/>
            <person name="Potier S."/>
            <person name="Purnelle B."/>
            <person name="Rieger M."/>
            <person name="Riles L."/>
            <person name="Rinaldi T."/>
            <person name="Robben J."/>
            <person name="Rodrigues-Pousada C."/>
            <person name="Rodriguez-Belmonte E."/>
            <person name="Rodriguez-Torres A.M."/>
            <person name="Rose M."/>
            <person name="Ruzzi M."/>
            <person name="Saliola M."/>
            <person name="Sanchez-Perez M."/>
            <person name="Schaefer B."/>
            <person name="Schaefer M."/>
            <person name="Scharfe M."/>
            <person name="Schmidheini T."/>
            <person name="Schreer A."/>
            <person name="Skala J."/>
            <person name="Souciet J.-L."/>
            <person name="Steensma H.Y."/>
            <person name="Talla E."/>
            <person name="Thierry A."/>
            <person name="Vandenbol M."/>
            <person name="van der Aart Q.J.M."/>
            <person name="Van Dyck L."/>
            <person name="Vanoni M."/>
            <person name="Verhasselt P."/>
            <person name="Voet M."/>
            <person name="Volckaert G."/>
            <person name="Wambutt R."/>
            <person name="Watson M.D."/>
            <person name="Weber N."/>
            <person name="Wedler E."/>
            <person name="Wedler H."/>
            <person name="Wipfli P."/>
            <person name="Wolf K."/>
            <person name="Wright L.F."/>
            <person name="Zaccaria P."/>
            <person name="Zimmermann M."/>
            <person name="Zollner A."/>
            <person name="Kleine K."/>
        </authorList>
    </citation>
    <scope>NUCLEOTIDE SEQUENCE [LARGE SCALE GENOMIC DNA]</scope>
    <source>
        <strain>ATCC 204508 / S288c</strain>
    </source>
</reference>
<reference key="3">
    <citation type="journal article" date="2014" name="G3 (Bethesda)">
        <title>The reference genome sequence of Saccharomyces cerevisiae: Then and now.</title>
        <authorList>
            <person name="Engel S.R."/>
            <person name="Dietrich F.S."/>
            <person name="Fisk D.G."/>
            <person name="Binkley G."/>
            <person name="Balakrishnan R."/>
            <person name="Costanzo M.C."/>
            <person name="Dwight S.S."/>
            <person name="Hitz B.C."/>
            <person name="Karra K."/>
            <person name="Nash R.S."/>
            <person name="Weng S."/>
            <person name="Wong E.D."/>
            <person name="Lloyd P."/>
            <person name="Skrzypek M.S."/>
            <person name="Miyasato S.R."/>
            <person name="Simison M."/>
            <person name="Cherry J.M."/>
        </authorList>
    </citation>
    <scope>GENOME REANNOTATION</scope>
    <source>
        <strain>ATCC 204508 / S288c</strain>
    </source>
</reference>
<reference key="4">
    <citation type="journal article" date="1984" name="J. Biol. Chem.">
        <title>Yeast LEU1. Repression of mRNA levels by leucine and relationship of 5'-noncoding region to that of LEU2.</title>
        <authorList>
            <person name="Hsu Y.-P."/>
            <person name="Schimmel P.R."/>
        </authorList>
    </citation>
    <scope>NUCLEOTIDE SEQUENCE [GENOMIC DNA] OF 1-48</scope>
</reference>
<reference key="5">
    <citation type="journal article" date="1991" name="Yeast">
        <title>The DNA sequencing of the 17 kb HindIII fragment spanning the LEU1 and ATE1 loci on chromosome VII from Saccharomyces cerevisiae reveals the PDR6 gene, a new member of the genetic network controlling pleiotropic drug resistance.</title>
        <authorList>
            <person name="Chen W."/>
            <person name="Balzi E."/>
            <person name="Capieaux E."/>
            <person name="Choder M."/>
            <person name="Goffeau A."/>
        </authorList>
    </citation>
    <scope>NUCLEOTIDE SEQUENCE [GENOMIC DNA] OF 740-779</scope>
    <source>
        <strain>ATCC 46191 / IL125-2B</strain>
    </source>
</reference>
<reference key="6">
    <citation type="journal article" date="2003" name="Nature">
        <title>Global analysis of protein expression in yeast.</title>
        <authorList>
            <person name="Ghaemmaghami S."/>
            <person name="Huh W.-K."/>
            <person name="Bower K."/>
            <person name="Howson R.W."/>
            <person name="Belle A."/>
            <person name="Dephoure N."/>
            <person name="O'Shea E.K."/>
            <person name="Weissman J.S."/>
        </authorList>
    </citation>
    <scope>LEVEL OF PROTEIN EXPRESSION [LARGE SCALE ANALYSIS]</scope>
</reference>
<reference key="7">
    <citation type="journal article" date="2007" name="J. Proteome Res.">
        <title>Large-scale phosphorylation analysis of alpha-factor-arrested Saccharomyces cerevisiae.</title>
        <authorList>
            <person name="Li X."/>
            <person name="Gerber S.A."/>
            <person name="Rudner A.D."/>
            <person name="Beausoleil S.A."/>
            <person name="Haas W."/>
            <person name="Villen J."/>
            <person name="Elias J.E."/>
            <person name="Gygi S.P."/>
        </authorList>
    </citation>
    <scope>PHOSPHORYLATION [LARGE SCALE ANALYSIS] AT SER-488</scope>
    <scope>IDENTIFICATION BY MASS SPECTROMETRY [LARGE SCALE ANALYSIS]</scope>
    <source>
        <strain>ADR376</strain>
    </source>
</reference>
<reference key="8">
    <citation type="journal article" date="2007" name="Proc. Natl. Acad. Sci. U.S.A.">
        <title>Analysis of phosphorylation sites on proteins from Saccharomyces cerevisiae by electron transfer dissociation (ETD) mass spectrometry.</title>
        <authorList>
            <person name="Chi A."/>
            <person name="Huttenhower C."/>
            <person name="Geer L.Y."/>
            <person name="Coon J.J."/>
            <person name="Syka J.E.P."/>
            <person name="Bai D.L."/>
            <person name="Shabanowitz J."/>
            <person name="Burke D.J."/>
            <person name="Troyanskaya O.G."/>
            <person name="Hunt D.F."/>
        </authorList>
    </citation>
    <scope>IDENTIFICATION BY MASS SPECTROMETRY [LARGE SCALE ANALYSIS]</scope>
</reference>
<reference key="9">
    <citation type="journal article" date="2008" name="Mol. Cell. Proteomics">
        <title>A multidimensional chromatography technology for in-depth phosphoproteome analysis.</title>
        <authorList>
            <person name="Albuquerque C.P."/>
            <person name="Smolka M.B."/>
            <person name="Payne S.H."/>
            <person name="Bafna V."/>
            <person name="Eng J."/>
            <person name="Zhou H."/>
        </authorList>
    </citation>
    <scope>IDENTIFICATION BY MASS SPECTROMETRY [LARGE SCALE ANALYSIS]</scope>
</reference>
<reference key="10">
    <citation type="journal article" date="2009" name="Science">
        <title>Global analysis of Cdk1 substrate phosphorylation sites provides insights into evolution.</title>
        <authorList>
            <person name="Holt L.J."/>
            <person name="Tuch B.B."/>
            <person name="Villen J."/>
            <person name="Johnson A.D."/>
            <person name="Gygi S.P."/>
            <person name="Morgan D.O."/>
        </authorList>
    </citation>
    <scope>PHOSPHORYLATION [LARGE SCALE ANALYSIS] AT SER-488; THR-494 AND SER-495</scope>
    <scope>IDENTIFICATION BY MASS SPECTROMETRY [LARGE SCALE ANALYSIS]</scope>
</reference>
<reference key="11">
    <citation type="journal article" date="2012" name="Proc. Natl. Acad. Sci. U.S.A.">
        <title>N-terminal acetylome analyses and functional insights of the N-terminal acetyltransferase NatB.</title>
        <authorList>
            <person name="Van Damme P."/>
            <person name="Lasa M."/>
            <person name="Polevoda B."/>
            <person name="Gazquez C."/>
            <person name="Elosegui-Artola A."/>
            <person name="Kim D.S."/>
            <person name="De Juan-Pardo E."/>
            <person name="Demeyer K."/>
            <person name="Hole K."/>
            <person name="Larrea E."/>
            <person name="Timmerman E."/>
            <person name="Prieto J."/>
            <person name="Arnesen T."/>
            <person name="Sherman F."/>
            <person name="Gevaert K."/>
            <person name="Aldabe R."/>
        </authorList>
    </citation>
    <scope>IDENTIFICATION BY MASS SPECTROMETRY [LARGE SCALE ANALYSIS]</scope>
</reference>
<feature type="chain" id="PRO_0000076894" description="3-isopropylmalate dehydratase">
    <location>
        <begin position="1"/>
        <end position="779"/>
    </location>
</feature>
<feature type="region of interest" description="Disordered" evidence="2">
    <location>
        <begin position="484"/>
        <end position="518"/>
    </location>
</feature>
<feature type="compositionally biased region" description="Basic and acidic residues" evidence="2">
    <location>
        <begin position="501"/>
        <end position="510"/>
    </location>
</feature>
<feature type="binding site" evidence="1">
    <location>
        <position position="360"/>
    </location>
    <ligand>
        <name>[4Fe-4S] cluster</name>
        <dbReference type="ChEBI" id="CHEBI:49883"/>
    </ligand>
</feature>
<feature type="binding site" evidence="1">
    <location>
        <position position="421"/>
    </location>
    <ligand>
        <name>[4Fe-4S] cluster</name>
        <dbReference type="ChEBI" id="CHEBI:49883"/>
    </ligand>
</feature>
<feature type="binding site" evidence="1">
    <location>
        <position position="424"/>
    </location>
    <ligand>
        <name>[4Fe-4S] cluster</name>
        <dbReference type="ChEBI" id="CHEBI:49883"/>
    </ligand>
</feature>
<feature type="modified residue" description="Phosphoserine" evidence="5 6">
    <location>
        <position position="488"/>
    </location>
</feature>
<feature type="modified residue" description="Phosphothreonine" evidence="6">
    <location>
        <position position="494"/>
    </location>
</feature>
<feature type="modified residue" description="Phosphoserine" evidence="6">
    <location>
        <position position="495"/>
    </location>
</feature>
<feature type="sequence conflict" description="In Ref. 1; AAB19612." evidence="4" ref="1">
    <original>N</original>
    <variation>TLKH</variation>
    <location>
        <position position="291"/>
    </location>
</feature>
<feature type="sequence conflict" description="In Ref. 1; AAB19612." evidence="4" ref="1">
    <original>I</original>
    <variation>M</variation>
    <location>
        <position position="423"/>
    </location>
</feature>
<feature type="sequence conflict" description="In Ref. 1; AAB19612." evidence="4" ref="1">
    <original>M</original>
    <variation>I</variation>
    <location>
        <position position="459"/>
    </location>
</feature>
<feature type="sequence conflict" description="In Ref. 1; AAB19612 and 5; S58126." evidence="4" ref="1 5">
    <original>R</original>
    <variation>K</variation>
    <location>
        <position position="744"/>
    </location>
</feature>
<comment type="function">
    <text>Catalyzes the isomerization between 2-isopropylmalate and 3-isopropylmalate, via the formation of 2-isopropylmaleate.</text>
</comment>
<comment type="catalytic activity">
    <reaction>
        <text>(2R,3S)-3-isopropylmalate = (2S)-2-isopropylmalate</text>
        <dbReference type="Rhea" id="RHEA:32287"/>
        <dbReference type="ChEBI" id="CHEBI:1178"/>
        <dbReference type="ChEBI" id="CHEBI:35121"/>
        <dbReference type="EC" id="4.2.1.33"/>
    </reaction>
</comment>
<comment type="cofactor">
    <cofactor evidence="1">
        <name>[4Fe-4S] cluster</name>
        <dbReference type="ChEBI" id="CHEBI:49883"/>
    </cofactor>
    <text evidence="1">Binds 1 [4Fe-4S] cluster per subunit.</text>
</comment>
<comment type="pathway">
    <text>Amino-acid biosynthesis; L-leucine biosynthesis; L-leucine from 3-methyl-2-oxobutanoate: step 2/4.</text>
</comment>
<comment type="subunit">
    <text>Monomer.</text>
</comment>
<comment type="miscellaneous">
    <text evidence="3">Present with 96300 molecules/cell in log phase SD medium.</text>
</comment>
<comment type="similarity">
    <text evidence="4">Belongs to the aconitase/IPM isomerase family.</text>
</comment>
<protein>
    <recommendedName>
        <fullName>3-isopropylmalate dehydratase</fullName>
        <ecNumber>4.2.1.33</ecNumber>
    </recommendedName>
    <alternativeName>
        <fullName>Alpha-IPM isomerase</fullName>
        <shortName>IPMI</shortName>
    </alternativeName>
    <alternativeName>
        <fullName>Isopropylmalate isomerase</fullName>
    </alternativeName>
</protein>
<organism>
    <name type="scientific">Saccharomyces cerevisiae (strain ATCC 204508 / S288c)</name>
    <name type="common">Baker's yeast</name>
    <dbReference type="NCBI Taxonomy" id="559292"/>
    <lineage>
        <taxon>Eukaryota</taxon>
        <taxon>Fungi</taxon>
        <taxon>Dikarya</taxon>
        <taxon>Ascomycota</taxon>
        <taxon>Saccharomycotina</taxon>
        <taxon>Saccharomycetes</taxon>
        <taxon>Saccharomycetales</taxon>
        <taxon>Saccharomycetaceae</taxon>
        <taxon>Saccharomyces</taxon>
    </lineage>
</organism>
<accession>P07264</accession>
<accession>D6VUC8</accession>
<proteinExistence type="evidence at protein level"/>
<name>LEUC_YEAST</name>
<keyword id="KW-0004">4Fe-4S</keyword>
<keyword id="KW-0028">Amino-acid biosynthesis</keyword>
<keyword id="KW-0100">Branched-chain amino acid biosynthesis</keyword>
<keyword id="KW-0408">Iron</keyword>
<keyword id="KW-0411">Iron-sulfur</keyword>
<keyword id="KW-0432">Leucine biosynthesis</keyword>
<keyword id="KW-0456">Lyase</keyword>
<keyword id="KW-0479">Metal-binding</keyword>
<keyword id="KW-0597">Phosphoprotein</keyword>
<keyword id="KW-1185">Reference proteome</keyword>
<evidence type="ECO:0000250" key="1"/>
<evidence type="ECO:0000256" key="2">
    <source>
        <dbReference type="SAM" id="MobiDB-lite"/>
    </source>
</evidence>
<evidence type="ECO:0000269" key="3">
    <source>
    </source>
</evidence>
<evidence type="ECO:0000305" key="4"/>
<evidence type="ECO:0007744" key="5">
    <source>
    </source>
</evidence>
<evidence type="ECO:0007744" key="6">
    <source>
    </source>
</evidence>
<gene>
    <name type="primary">LEU1</name>
    <name type="ordered locus">YGL009C</name>
</gene>
<dbReference type="EC" id="4.2.1.33"/>
<dbReference type="EMBL" id="S57886">
    <property type="protein sequence ID" value="AAB19612.1"/>
    <property type="molecule type" value="Genomic_DNA"/>
</dbReference>
<dbReference type="EMBL" id="Z72531">
    <property type="protein sequence ID" value="CAA96709.1"/>
    <property type="molecule type" value="Genomic_DNA"/>
</dbReference>
<dbReference type="EMBL" id="K01969">
    <property type="protein sequence ID" value="AAA34742.1"/>
    <property type="molecule type" value="Genomic_DNA"/>
</dbReference>
<dbReference type="EMBL" id="S58126">
    <property type="status" value="NOT_ANNOTATED_CDS"/>
    <property type="molecule type" value="Genomic_DNA"/>
</dbReference>
<dbReference type="EMBL" id="BK006941">
    <property type="protein sequence ID" value="DAA08089.1"/>
    <property type="molecule type" value="Genomic_DNA"/>
</dbReference>
<dbReference type="PIR" id="S64011">
    <property type="entry name" value="S64011"/>
</dbReference>
<dbReference type="RefSeq" id="NP_011506.1">
    <property type="nucleotide sequence ID" value="NM_001180874.1"/>
</dbReference>
<dbReference type="SMR" id="P07264"/>
<dbReference type="BioGRID" id="33237">
    <property type="interactions" value="112"/>
</dbReference>
<dbReference type="DIP" id="DIP-6715N"/>
<dbReference type="FunCoup" id="P07264">
    <property type="interactions" value="354"/>
</dbReference>
<dbReference type="IntAct" id="P07264">
    <property type="interactions" value="12"/>
</dbReference>
<dbReference type="MINT" id="P07264"/>
<dbReference type="STRING" id="4932.YGL009C"/>
<dbReference type="iPTMnet" id="P07264"/>
<dbReference type="PaxDb" id="4932-YGL009C"/>
<dbReference type="PeptideAtlas" id="P07264"/>
<dbReference type="EnsemblFungi" id="YGL009C_mRNA">
    <property type="protein sequence ID" value="YGL009C"/>
    <property type="gene ID" value="YGL009C"/>
</dbReference>
<dbReference type="GeneID" id="852875"/>
<dbReference type="KEGG" id="sce:YGL009C"/>
<dbReference type="AGR" id="SGD:S000002977"/>
<dbReference type="SGD" id="S000002977">
    <property type="gene designation" value="LEU1"/>
</dbReference>
<dbReference type="VEuPathDB" id="FungiDB:YGL009C"/>
<dbReference type="eggNOG" id="KOG0454">
    <property type="taxonomic scope" value="Eukaryota"/>
</dbReference>
<dbReference type="HOGENOM" id="CLU_006714_1_0_1"/>
<dbReference type="InParanoid" id="P07264"/>
<dbReference type="OMA" id="EDNEPHT"/>
<dbReference type="OrthoDB" id="2279155at2759"/>
<dbReference type="BioCyc" id="YEAST:YGL009C-MONOMER"/>
<dbReference type="UniPathway" id="UPA00048">
    <property type="reaction ID" value="UER00071"/>
</dbReference>
<dbReference type="BioGRID-ORCS" id="852875">
    <property type="hits" value="7 hits in 10 CRISPR screens"/>
</dbReference>
<dbReference type="CD-CODE" id="E03F929F">
    <property type="entry name" value="Stress granule"/>
</dbReference>
<dbReference type="PRO" id="PR:P07264"/>
<dbReference type="Proteomes" id="UP000002311">
    <property type="component" value="Chromosome VII"/>
</dbReference>
<dbReference type="RNAct" id="P07264">
    <property type="molecule type" value="protein"/>
</dbReference>
<dbReference type="GO" id="GO:0009316">
    <property type="term" value="C:3-isopropylmalate dehydratase complex"/>
    <property type="evidence" value="ECO:0007669"/>
    <property type="project" value="InterPro"/>
</dbReference>
<dbReference type="GO" id="GO:0010494">
    <property type="term" value="C:cytoplasmic stress granule"/>
    <property type="evidence" value="ECO:0007005"/>
    <property type="project" value="SGD"/>
</dbReference>
<dbReference type="GO" id="GO:0005829">
    <property type="term" value="C:cytosol"/>
    <property type="evidence" value="ECO:0000314"/>
    <property type="project" value="SGD"/>
</dbReference>
<dbReference type="GO" id="GO:0003861">
    <property type="term" value="F:3-isopropylmalate dehydratase activity"/>
    <property type="evidence" value="ECO:0000315"/>
    <property type="project" value="SGD"/>
</dbReference>
<dbReference type="GO" id="GO:0051539">
    <property type="term" value="F:4 iron, 4 sulfur cluster binding"/>
    <property type="evidence" value="ECO:0007669"/>
    <property type="project" value="UniProtKB-KW"/>
</dbReference>
<dbReference type="GO" id="GO:0046872">
    <property type="term" value="F:metal ion binding"/>
    <property type="evidence" value="ECO:0007669"/>
    <property type="project" value="UniProtKB-KW"/>
</dbReference>
<dbReference type="GO" id="GO:0009098">
    <property type="term" value="P:L-leucine biosynthetic process"/>
    <property type="evidence" value="ECO:0000315"/>
    <property type="project" value="SGD"/>
</dbReference>
<dbReference type="CDD" id="cd01583">
    <property type="entry name" value="IPMI"/>
    <property type="match status" value="1"/>
</dbReference>
<dbReference type="CDD" id="cd01577">
    <property type="entry name" value="IPMI_Swivel"/>
    <property type="match status" value="1"/>
</dbReference>
<dbReference type="FunFam" id="3.30.499.10:FF:000023">
    <property type="entry name" value="3-isopropylmalate dehydratase"/>
    <property type="match status" value="1"/>
</dbReference>
<dbReference type="FunFam" id="3.30.499.10:FF:000006">
    <property type="entry name" value="3-isopropylmalate dehydratase large subunit"/>
    <property type="match status" value="1"/>
</dbReference>
<dbReference type="FunFam" id="3.20.19.10:FF:000003">
    <property type="entry name" value="3-isopropylmalate dehydratase small subunit"/>
    <property type="match status" value="1"/>
</dbReference>
<dbReference type="Gene3D" id="3.30.499.10">
    <property type="entry name" value="Aconitase, domain 3"/>
    <property type="match status" value="2"/>
</dbReference>
<dbReference type="Gene3D" id="3.20.19.10">
    <property type="entry name" value="Aconitase, domain 4"/>
    <property type="match status" value="1"/>
</dbReference>
<dbReference type="HAMAP" id="MF_01026">
    <property type="entry name" value="LeuC_type1"/>
    <property type="match status" value="1"/>
</dbReference>
<dbReference type="HAMAP" id="MF_01031">
    <property type="entry name" value="LeuD_type1"/>
    <property type="match status" value="1"/>
</dbReference>
<dbReference type="InterPro" id="IPR004430">
    <property type="entry name" value="3-IsopropMal_deHydase_lsu"/>
</dbReference>
<dbReference type="InterPro" id="IPR004431">
    <property type="entry name" value="3-IsopropMal_deHydase_ssu"/>
</dbReference>
<dbReference type="InterPro" id="IPR012235">
    <property type="entry name" value="3-IsopropMal_deHydtase_ssu/lsu"/>
</dbReference>
<dbReference type="InterPro" id="IPR015931">
    <property type="entry name" value="Acnase/IPM_dHydase_lsu_aba_1/3"/>
</dbReference>
<dbReference type="InterPro" id="IPR001030">
    <property type="entry name" value="Acoase/IPM_deHydtase_lsu_aba"/>
</dbReference>
<dbReference type="InterPro" id="IPR015928">
    <property type="entry name" value="Aconitase/3IPM_dehydase_swvl"/>
</dbReference>
<dbReference type="InterPro" id="IPR018136">
    <property type="entry name" value="Aconitase_4Fe-4S_BS"/>
</dbReference>
<dbReference type="InterPro" id="IPR036008">
    <property type="entry name" value="Aconitase_4Fe-4S_dom"/>
</dbReference>
<dbReference type="InterPro" id="IPR000573">
    <property type="entry name" value="AconitaseA/IPMdHydase_ssu_swvl"/>
</dbReference>
<dbReference type="InterPro" id="IPR050067">
    <property type="entry name" value="IPM_dehydratase_rel_enz"/>
</dbReference>
<dbReference type="InterPro" id="IPR033941">
    <property type="entry name" value="IPMI_cat"/>
</dbReference>
<dbReference type="InterPro" id="IPR033940">
    <property type="entry name" value="IPMI_Swivel"/>
</dbReference>
<dbReference type="NCBIfam" id="TIGR00170">
    <property type="entry name" value="leuC"/>
    <property type="match status" value="1"/>
</dbReference>
<dbReference type="NCBIfam" id="TIGR00171">
    <property type="entry name" value="leuD"/>
    <property type="match status" value="1"/>
</dbReference>
<dbReference type="NCBIfam" id="NF002458">
    <property type="entry name" value="PRK01641.1"/>
    <property type="match status" value="1"/>
</dbReference>
<dbReference type="NCBIfam" id="NF004016">
    <property type="entry name" value="PRK05478.1"/>
    <property type="match status" value="1"/>
</dbReference>
<dbReference type="NCBIfam" id="NF009116">
    <property type="entry name" value="PRK12466.1"/>
    <property type="match status" value="1"/>
</dbReference>
<dbReference type="PANTHER" id="PTHR43822:SF9">
    <property type="entry name" value="3-ISOPROPYLMALATE DEHYDRATASE"/>
    <property type="match status" value="1"/>
</dbReference>
<dbReference type="PANTHER" id="PTHR43822">
    <property type="entry name" value="HOMOACONITASE, MITOCHONDRIAL-RELATED"/>
    <property type="match status" value="1"/>
</dbReference>
<dbReference type="Pfam" id="PF00330">
    <property type="entry name" value="Aconitase"/>
    <property type="match status" value="1"/>
</dbReference>
<dbReference type="Pfam" id="PF00694">
    <property type="entry name" value="Aconitase_C"/>
    <property type="match status" value="1"/>
</dbReference>
<dbReference type="PIRSF" id="PIRSF001418">
    <property type="entry name" value="ACN"/>
    <property type="match status" value="1"/>
</dbReference>
<dbReference type="PRINTS" id="PR00415">
    <property type="entry name" value="ACONITASE"/>
</dbReference>
<dbReference type="SUPFAM" id="SSF53732">
    <property type="entry name" value="Aconitase iron-sulfur domain"/>
    <property type="match status" value="1"/>
</dbReference>
<dbReference type="SUPFAM" id="SSF52016">
    <property type="entry name" value="LeuD/IlvD-like"/>
    <property type="match status" value="1"/>
</dbReference>
<dbReference type="PROSITE" id="PS00450">
    <property type="entry name" value="ACONITASE_1"/>
    <property type="match status" value="1"/>
</dbReference>
<dbReference type="PROSITE" id="PS01244">
    <property type="entry name" value="ACONITASE_2"/>
    <property type="match status" value="1"/>
</dbReference>